<proteinExistence type="evidence at protein level"/>
<feature type="chain" id="PRO_0000047690" description="Zinc finger protein 615">
    <location>
        <begin position="1"/>
        <end position="731"/>
    </location>
</feature>
<feature type="domain" description="KRAB" evidence="2">
    <location>
        <begin position="8"/>
        <end position="79"/>
    </location>
</feature>
<feature type="zinc finger region" description="C2H2-type 1" evidence="1">
    <location>
        <begin position="204"/>
        <end position="226"/>
    </location>
</feature>
<feature type="zinc finger region" description="C2H2-type 2" evidence="1">
    <location>
        <begin position="232"/>
        <end position="254"/>
    </location>
</feature>
<feature type="zinc finger region" description="C2H2-type 3" evidence="1">
    <location>
        <begin position="260"/>
        <end position="282"/>
    </location>
</feature>
<feature type="zinc finger region" description="C2H2-type 4" evidence="1">
    <location>
        <begin position="288"/>
        <end position="310"/>
    </location>
</feature>
<feature type="zinc finger region" description="C2H2-type 5" evidence="1">
    <location>
        <begin position="316"/>
        <end position="338"/>
    </location>
</feature>
<feature type="zinc finger region" description="C2H2-type 6" evidence="1">
    <location>
        <begin position="344"/>
        <end position="366"/>
    </location>
</feature>
<feature type="zinc finger region" description="C2H2-type 7" evidence="1">
    <location>
        <begin position="372"/>
        <end position="394"/>
    </location>
</feature>
<feature type="zinc finger region" description="C2H2-type 8" evidence="1">
    <location>
        <begin position="400"/>
        <end position="422"/>
    </location>
</feature>
<feature type="zinc finger region" description="C2H2-type 9" evidence="1">
    <location>
        <begin position="428"/>
        <end position="450"/>
    </location>
</feature>
<feature type="zinc finger region" description="C2H2-type 10" evidence="1">
    <location>
        <begin position="456"/>
        <end position="478"/>
    </location>
</feature>
<feature type="zinc finger region" description="C2H2-type 11" evidence="1">
    <location>
        <begin position="484"/>
        <end position="506"/>
    </location>
</feature>
<feature type="zinc finger region" description="C2H2-type 12" evidence="1">
    <location>
        <begin position="512"/>
        <end position="534"/>
    </location>
</feature>
<feature type="zinc finger region" description="C2H2-type 13" evidence="1">
    <location>
        <begin position="540"/>
        <end position="562"/>
    </location>
</feature>
<feature type="zinc finger region" description="C2H2-type 14" evidence="1">
    <location>
        <begin position="568"/>
        <end position="590"/>
    </location>
</feature>
<feature type="zinc finger region" description="C2H2-type 15" evidence="1">
    <location>
        <begin position="596"/>
        <end position="618"/>
    </location>
</feature>
<feature type="zinc finger region" description="C2H2-type 16" evidence="1">
    <location>
        <begin position="624"/>
        <end position="646"/>
    </location>
</feature>
<feature type="zinc finger region" description="C2H2-type 17" evidence="1">
    <location>
        <begin position="652"/>
        <end position="674"/>
    </location>
</feature>
<feature type="zinc finger region" description="C2H2-type 18" evidence="1">
    <location>
        <begin position="680"/>
        <end position="702"/>
    </location>
</feature>
<feature type="zinc finger region" description="C2H2-type 19" evidence="1">
    <location>
        <begin position="708"/>
        <end position="730"/>
    </location>
</feature>
<feature type="splice variant" id="VSP_039717" description="In isoform 3." evidence="5">
    <original>MMQAQ</original>
    <variation>M</variation>
    <location>
        <begin position="1"/>
        <end position="5"/>
    </location>
</feature>
<feature type="splice variant" id="VSP_029582" description="In isoform 2 and isoform 3." evidence="5 6 7">
    <original>S</original>
    <variation>SDSGGASGGAYA</variation>
    <location>
        <position position="79"/>
    </location>
</feature>
<feature type="sequence variant" id="VAR_037285" description="In dbSNP:rs10500311." evidence="3 4">
    <original>T</original>
    <variation>M</variation>
    <location>
        <position position="129"/>
    </location>
</feature>
<feature type="sequence variant" id="VAR_037286" description="In dbSNP:rs1978717." evidence="3 4">
    <original>T</original>
    <variation>I</variation>
    <location>
        <position position="360"/>
    </location>
</feature>
<feature type="sequence variant" id="VAR_037287" description="In dbSNP:rs16983353." evidence="3 4">
    <original>R</original>
    <variation>K</variation>
    <location>
        <position position="727"/>
    </location>
</feature>
<feature type="sequence conflict" description="In Ref. 1; BAD18638." evidence="8" ref="1">
    <original>G</original>
    <variation>D</variation>
    <location>
        <position position="576"/>
    </location>
</feature>
<gene>
    <name type="primary">ZNF615</name>
</gene>
<evidence type="ECO:0000255" key="1">
    <source>
        <dbReference type="PROSITE-ProRule" id="PRU00042"/>
    </source>
</evidence>
<evidence type="ECO:0000255" key="2">
    <source>
        <dbReference type="PROSITE-ProRule" id="PRU00119"/>
    </source>
</evidence>
<evidence type="ECO:0000269" key="3">
    <source>
    </source>
</evidence>
<evidence type="ECO:0000269" key="4">
    <source>
    </source>
</evidence>
<evidence type="ECO:0000303" key="5">
    <source>
    </source>
</evidence>
<evidence type="ECO:0000303" key="6">
    <source>
    </source>
</evidence>
<evidence type="ECO:0000303" key="7">
    <source>
    </source>
</evidence>
<evidence type="ECO:0000305" key="8"/>
<dbReference type="EMBL" id="AK128361">
    <property type="protein sequence ID" value="BAC87399.1"/>
    <property type="status" value="ALT_SEQ"/>
    <property type="molecule type" value="mRNA"/>
</dbReference>
<dbReference type="EMBL" id="AK131494">
    <property type="protein sequence ID" value="BAD18638.1"/>
    <property type="molecule type" value="mRNA"/>
</dbReference>
<dbReference type="EMBL" id="CR936612">
    <property type="protein sequence ID" value="CAI56755.1"/>
    <property type="molecule type" value="mRNA"/>
</dbReference>
<dbReference type="EMBL" id="AC011460">
    <property type="status" value="NOT_ANNOTATED_CDS"/>
    <property type="molecule type" value="Genomic_DNA"/>
</dbReference>
<dbReference type="EMBL" id="AC011468">
    <property type="status" value="NOT_ANNOTATED_CDS"/>
    <property type="molecule type" value="Genomic_DNA"/>
</dbReference>
<dbReference type="EMBL" id="BC105100">
    <property type="protein sequence ID" value="AAI05101.1"/>
    <property type="molecule type" value="mRNA"/>
</dbReference>
<dbReference type="EMBL" id="BC105102">
    <property type="protein sequence ID" value="AAI05103.1"/>
    <property type="molecule type" value="mRNA"/>
</dbReference>
<dbReference type="EMBL" id="BC143429">
    <property type="protein sequence ID" value="AAI43430.1"/>
    <property type="molecule type" value="mRNA"/>
</dbReference>
<dbReference type="CCDS" id="CCDS12846.1">
    <molecule id="Q8N8J6-1"/>
</dbReference>
<dbReference type="CCDS" id="CCDS59418.1">
    <molecule id="Q8N8J6-2"/>
</dbReference>
<dbReference type="RefSeq" id="NP_001186253.1">
    <molecule id="Q8N8J6-2"/>
    <property type="nucleotide sequence ID" value="NM_001199324.2"/>
</dbReference>
<dbReference type="RefSeq" id="NP_001308247.1">
    <molecule id="Q8N8J6-3"/>
    <property type="nucleotide sequence ID" value="NM_001321318.2"/>
</dbReference>
<dbReference type="RefSeq" id="NP_001308248.1">
    <molecule id="Q8N8J6-2"/>
    <property type="nucleotide sequence ID" value="NM_001321319.2"/>
</dbReference>
<dbReference type="RefSeq" id="NP_001308249.1">
    <molecule id="Q8N8J6-1"/>
    <property type="nucleotide sequence ID" value="NM_001321320.2"/>
</dbReference>
<dbReference type="RefSeq" id="NP_001308250.1">
    <molecule id="Q8N8J6-2"/>
    <property type="nucleotide sequence ID" value="NM_001321321.2"/>
</dbReference>
<dbReference type="RefSeq" id="NP_940882.3">
    <molecule id="Q8N8J6-1"/>
    <property type="nucleotide sequence ID" value="NM_198480.3"/>
</dbReference>
<dbReference type="RefSeq" id="XP_011525126.1">
    <property type="nucleotide sequence ID" value="XM_011526824.1"/>
</dbReference>
<dbReference type="RefSeq" id="XP_011525127.1">
    <property type="nucleotide sequence ID" value="XM_011526825.1"/>
</dbReference>
<dbReference type="RefSeq" id="XP_011525128.1">
    <property type="nucleotide sequence ID" value="XM_011526826.1"/>
</dbReference>
<dbReference type="RefSeq" id="XP_016882137.1">
    <molecule id="Q8N8J6-1"/>
    <property type="nucleotide sequence ID" value="XM_017026648.3"/>
</dbReference>
<dbReference type="RefSeq" id="XP_016882138.1">
    <property type="nucleotide sequence ID" value="XM_017026649.1"/>
</dbReference>
<dbReference type="RefSeq" id="XP_047294600.1">
    <molecule id="Q8N8J6-2"/>
    <property type="nucleotide sequence ID" value="XM_047438644.1"/>
</dbReference>
<dbReference type="RefSeq" id="XP_047294601.1">
    <molecule id="Q8N8J6-2"/>
    <property type="nucleotide sequence ID" value="XM_047438645.1"/>
</dbReference>
<dbReference type="RefSeq" id="XP_047294602.1">
    <molecule id="Q8N8J6-2"/>
    <property type="nucleotide sequence ID" value="XM_047438646.1"/>
</dbReference>
<dbReference type="RefSeq" id="XP_047294603.1">
    <molecule id="Q8N8J6-2"/>
    <property type="nucleotide sequence ID" value="XM_047438647.1"/>
</dbReference>
<dbReference type="RefSeq" id="XP_054176618.1">
    <molecule id="Q8N8J6-2"/>
    <property type="nucleotide sequence ID" value="XM_054320643.1"/>
</dbReference>
<dbReference type="RefSeq" id="XP_054176619.1">
    <molecule id="Q8N8J6-2"/>
    <property type="nucleotide sequence ID" value="XM_054320644.1"/>
</dbReference>
<dbReference type="RefSeq" id="XP_054176620.1">
    <molecule id="Q8N8J6-2"/>
    <property type="nucleotide sequence ID" value="XM_054320645.1"/>
</dbReference>
<dbReference type="RefSeq" id="XP_054176621.1">
    <molecule id="Q8N8J6-2"/>
    <property type="nucleotide sequence ID" value="XM_054320646.1"/>
</dbReference>
<dbReference type="RefSeq" id="XP_054176622.1">
    <molecule id="Q8N8J6-1"/>
    <property type="nucleotide sequence ID" value="XM_054320647.1"/>
</dbReference>
<dbReference type="SMR" id="Q8N8J6"/>
<dbReference type="BioGRID" id="129849">
    <property type="interactions" value="5"/>
</dbReference>
<dbReference type="FunCoup" id="Q8N8J6">
    <property type="interactions" value="13"/>
</dbReference>
<dbReference type="IntAct" id="Q8N8J6">
    <property type="interactions" value="1"/>
</dbReference>
<dbReference type="STRING" id="9606.ENSP00000471041"/>
<dbReference type="GlyGen" id="Q8N8J6">
    <property type="glycosylation" value="1 site, 1 O-linked glycan (1 site)"/>
</dbReference>
<dbReference type="iPTMnet" id="Q8N8J6"/>
<dbReference type="PhosphoSitePlus" id="Q8N8J6"/>
<dbReference type="BioMuta" id="ZNF615"/>
<dbReference type="DMDM" id="161784348"/>
<dbReference type="jPOST" id="Q8N8J6"/>
<dbReference type="MassIVE" id="Q8N8J6"/>
<dbReference type="PaxDb" id="9606-ENSP00000471549"/>
<dbReference type="PeptideAtlas" id="Q8N8J6"/>
<dbReference type="ProteomicsDB" id="72428">
    <molecule id="Q8N8J6-1"/>
</dbReference>
<dbReference type="ProteomicsDB" id="72429">
    <molecule id="Q8N8J6-2"/>
</dbReference>
<dbReference type="ProteomicsDB" id="72430">
    <molecule id="Q8N8J6-3"/>
</dbReference>
<dbReference type="Antibodypedia" id="32547">
    <property type="antibodies" value="10 antibodies from 6 providers"/>
</dbReference>
<dbReference type="DNASU" id="284370"/>
<dbReference type="Ensembl" id="ENST00000376716.9">
    <molecule id="Q8N8J6-1"/>
    <property type="protein sequence ID" value="ENSP00000365906.4"/>
    <property type="gene ID" value="ENSG00000197619.15"/>
</dbReference>
<dbReference type="Ensembl" id="ENST00000594083.5">
    <molecule id="Q8N8J6-2"/>
    <property type="protein sequence ID" value="ENSP00000471549.1"/>
    <property type="gene ID" value="ENSG00000197619.15"/>
</dbReference>
<dbReference type="Ensembl" id="ENST00000598071.6">
    <molecule id="Q8N8J6-2"/>
    <property type="protein sequence ID" value="ENSP00000471041.1"/>
    <property type="gene ID" value="ENSG00000197619.15"/>
</dbReference>
<dbReference type="Ensembl" id="ENST00000602063.5">
    <molecule id="Q8N8J6-1"/>
    <property type="protein sequence ID" value="ENSP00000473089.1"/>
    <property type="gene ID" value="ENSG00000197619.15"/>
</dbReference>
<dbReference type="Ensembl" id="ENST00000618487.4">
    <molecule id="Q8N8J6-2"/>
    <property type="protein sequence ID" value="ENSP00000483676.1"/>
    <property type="gene ID" value="ENSG00000197619.15"/>
</dbReference>
<dbReference type="GeneID" id="284370"/>
<dbReference type="KEGG" id="hsa:284370"/>
<dbReference type="MANE-Select" id="ENST00000598071.6">
    <molecule id="Q8N8J6-2"/>
    <property type="protein sequence ID" value="ENSP00000471041.1"/>
    <property type="RefSeq nucleotide sequence ID" value="NM_001199324.2"/>
    <property type="RefSeq protein sequence ID" value="NP_001186253.1"/>
</dbReference>
<dbReference type="UCSC" id="uc002pye.3">
    <molecule id="Q8N8J6-1"/>
    <property type="organism name" value="human"/>
</dbReference>
<dbReference type="AGR" id="HGNC:24740"/>
<dbReference type="CTD" id="284370"/>
<dbReference type="DisGeNET" id="284370"/>
<dbReference type="GeneCards" id="ZNF615"/>
<dbReference type="HGNC" id="HGNC:24740">
    <property type="gene designation" value="ZNF615"/>
</dbReference>
<dbReference type="HPA" id="ENSG00000197619">
    <property type="expression patterns" value="Low tissue specificity"/>
</dbReference>
<dbReference type="neXtProt" id="NX_Q8N8J6"/>
<dbReference type="OpenTargets" id="ENSG00000197619"/>
<dbReference type="PharmGKB" id="PA134872929"/>
<dbReference type="VEuPathDB" id="HostDB:ENSG00000197619"/>
<dbReference type="eggNOG" id="KOG1721">
    <property type="taxonomic scope" value="Eukaryota"/>
</dbReference>
<dbReference type="GeneTree" id="ENSGT00940000163298"/>
<dbReference type="HOGENOM" id="CLU_002678_44_5_1"/>
<dbReference type="InParanoid" id="Q8N8J6"/>
<dbReference type="OMA" id="HNTFADI"/>
<dbReference type="OrthoDB" id="6591996at2759"/>
<dbReference type="PAN-GO" id="Q8N8J6">
    <property type="GO annotations" value="4 GO annotations based on evolutionary models"/>
</dbReference>
<dbReference type="PhylomeDB" id="Q8N8J6"/>
<dbReference type="TreeFam" id="TF350804"/>
<dbReference type="PathwayCommons" id="Q8N8J6"/>
<dbReference type="Reactome" id="R-HSA-212436">
    <property type="pathway name" value="Generic Transcription Pathway"/>
</dbReference>
<dbReference type="SignaLink" id="Q8N8J6"/>
<dbReference type="BioGRID-ORCS" id="284370">
    <property type="hits" value="10 hits in 1173 CRISPR screens"/>
</dbReference>
<dbReference type="GenomeRNAi" id="284370"/>
<dbReference type="Pharos" id="Q8N8J6">
    <property type="development level" value="Tdark"/>
</dbReference>
<dbReference type="PRO" id="PR:Q8N8J6"/>
<dbReference type="Proteomes" id="UP000005640">
    <property type="component" value="Chromosome 19"/>
</dbReference>
<dbReference type="RNAct" id="Q8N8J6">
    <property type="molecule type" value="protein"/>
</dbReference>
<dbReference type="Bgee" id="ENSG00000197619">
    <property type="expression patterns" value="Expressed in cardiac muscle of right atrium and 178 other cell types or tissues"/>
</dbReference>
<dbReference type="ExpressionAtlas" id="Q8N8J6">
    <property type="expression patterns" value="baseline and differential"/>
</dbReference>
<dbReference type="GO" id="GO:0005634">
    <property type="term" value="C:nucleus"/>
    <property type="evidence" value="ECO:0000318"/>
    <property type="project" value="GO_Central"/>
</dbReference>
<dbReference type="GO" id="GO:0003677">
    <property type="term" value="F:DNA binding"/>
    <property type="evidence" value="ECO:0007669"/>
    <property type="project" value="UniProtKB-KW"/>
</dbReference>
<dbReference type="GO" id="GO:0008270">
    <property type="term" value="F:zinc ion binding"/>
    <property type="evidence" value="ECO:0007669"/>
    <property type="project" value="UniProtKB-KW"/>
</dbReference>
<dbReference type="GO" id="GO:0006357">
    <property type="term" value="P:regulation of transcription by RNA polymerase II"/>
    <property type="evidence" value="ECO:0000318"/>
    <property type="project" value="GO_Central"/>
</dbReference>
<dbReference type="CDD" id="cd07765">
    <property type="entry name" value="KRAB_A-box"/>
    <property type="match status" value="1"/>
</dbReference>
<dbReference type="FunFam" id="3.30.160.60:FF:000029">
    <property type="entry name" value="GLI family zinc finger 4"/>
    <property type="match status" value="1"/>
</dbReference>
<dbReference type="FunFam" id="3.30.160.60:FF:001576">
    <property type="entry name" value="HKR1, GLI-Kruppel zinc finger family member"/>
    <property type="match status" value="2"/>
</dbReference>
<dbReference type="FunFam" id="3.30.160.60:FF:002063">
    <property type="entry name" value="RB associated KRAB zinc finger"/>
    <property type="match status" value="2"/>
</dbReference>
<dbReference type="FunFam" id="3.30.160.60:FF:000478">
    <property type="entry name" value="Zinc finger protein 133"/>
    <property type="match status" value="2"/>
</dbReference>
<dbReference type="FunFam" id="3.30.160.60:FF:000638">
    <property type="entry name" value="Zinc finger protein 184"/>
    <property type="match status" value="1"/>
</dbReference>
<dbReference type="FunFam" id="3.30.160.60:FF:000006">
    <property type="entry name" value="Zinc finger protein 184 (Kruppel-like)"/>
    <property type="match status" value="2"/>
</dbReference>
<dbReference type="FunFam" id="3.30.160.60:FF:000058">
    <property type="entry name" value="Zinc finger protein 2 homolog"/>
    <property type="match status" value="1"/>
</dbReference>
<dbReference type="FunFam" id="3.30.160.60:FF:002343">
    <property type="entry name" value="Zinc finger protein 33A"/>
    <property type="match status" value="4"/>
</dbReference>
<dbReference type="FunFam" id="3.30.160.60:FF:000848">
    <property type="entry name" value="Zinc finger protein 35"/>
    <property type="match status" value="1"/>
</dbReference>
<dbReference type="FunFam" id="3.30.160.60:FF:000384">
    <property type="entry name" value="Zinc finger protein 550"/>
    <property type="match status" value="1"/>
</dbReference>
<dbReference type="FunFam" id="3.30.160.60:FF:001239">
    <property type="entry name" value="Zinc finger protein 615"/>
    <property type="match status" value="1"/>
</dbReference>
<dbReference type="FunFam" id="3.30.160.60:FF:000953">
    <property type="entry name" value="Zinc finger protein 691"/>
    <property type="match status" value="1"/>
</dbReference>
<dbReference type="Gene3D" id="6.10.140.140">
    <property type="match status" value="1"/>
</dbReference>
<dbReference type="Gene3D" id="3.30.160.60">
    <property type="entry name" value="Classic Zinc Finger"/>
    <property type="match status" value="19"/>
</dbReference>
<dbReference type="InterPro" id="IPR050636">
    <property type="entry name" value="C2H2-ZF_domain-containing"/>
</dbReference>
<dbReference type="InterPro" id="IPR001909">
    <property type="entry name" value="KRAB"/>
</dbReference>
<dbReference type="InterPro" id="IPR036051">
    <property type="entry name" value="KRAB_dom_sf"/>
</dbReference>
<dbReference type="InterPro" id="IPR036236">
    <property type="entry name" value="Znf_C2H2_sf"/>
</dbReference>
<dbReference type="InterPro" id="IPR013087">
    <property type="entry name" value="Znf_C2H2_type"/>
</dbReference>
<dbReference type="PANTHER" id="PTHR47772:SF15">
    <property type="entry name" value="REDUCED EXPRESSION 2-RELATED"/>
    <property type="match status" value="1"/>
</dbReference>
<dbReference type="PANTHER" id="PTHR47772">
    <property type="entry name" value="ZINC FINGER PROTEIN 200"/>
    <property type="match status" value="1"/>
</dbReference>
<dbReference type="Pfam" id="PF01352">
    <property type="entry name" value="KRAB"/>
    <property type="match status" value="1"/>
</dbReference>
<dbReference type="Pfam" id="PF00096">
    <property type="entry name" value="zf-C2H2"/>
    <property type="match status" value="17"/>
</dbReference>
<dbReference type="SMART" id="SM00349">
    <property type="entry name" value="KRAB"/>
    <property type="match status" value="1"/>
</dbReference>
<dbReference type="SMART" id="SM00355">
    <property type="entry name" value="ZnF_C2H2"/>
    <property type="match status" value="19"/>
</dbReference>
<dbReference type="SUPFAM" id="SSF57667">
    <property type="entry name" value="beta-beta-alpha zinc fingers"/>
    <property type="match status" value="10"/>
</dbReference>
<dbReference type="SUPFAM" id="SSF109640">
    <property type="entry name" value="KRAB domain (Kruppel-associated box)"/>
    <property type="match status" value="1"/>
</dbReference>
<dbReference type="PROSITE" id="PS50805">
    <property type="entry name" value="KRAB"/>
    <property type="match status" value="1"/>
</dbReference>
<dbReference type="PROSITE" id="PS00028">
    <property type="entry name" value="ZINC_FINGER_C2H2_1"/>
    <property type="match status" value="18"/>
</dbReference>
<dbReference type="PROSITE" id="PS50157">
    <property type="entry name" value="ZINC_FINGER_C2H2_2"/>
    <property type="match status" value="19"/>
</dbReference>
<reference key="1">
    <citation type="journal article" date="2004" name="Nat. Genet.">
        <title>Complete sequencing and characterization of 21,243 full-length human cDNAs.</title>
        <authorList>
            <person name="Ota T."/>
            <person name="Suzuki Y."/>
            <person name="Nishikawa T."/>
            <person name="Otsuki T."/>
            <person name="Sugiyama T."/>
            <person name="Irie R."/>
            <person name="Wakamatsu A."/>
            <person name="Hayashi K."/>
            <person name="Sato H."/>
            <person name="Nagai K."/>
            <person name="Kimura K."/>
            <person name="Makita H."/>
            <person name="Sekine M."/>
            <person name="Obayashi M."/>
            <person name="Nishi T."/>
            <person name="Shibahara T."/>
            <person name="Tanaka T."/>
            <person name="Ishii S."/>
            <person name="Yamamoto J."/>
            <person name="Saito K."/>
            <person name="Kawai Y."/>
            <person name="Isono Y."/>
            <person name="Nakamura Y."/>
            <person name="Nagahari K."/>
            <person name="Murakami K."/>
            <person name="Yasuda T."/>
            <person name="Iwayanagi T."/>
            <person name="Wagatsuma M."/>
            <person name="Shiratori A."/>
            <person name="Sudo H."/>
            <person name="Hosoiri T."/>
            <person name="Kaku Y."/>
            <person name="Kodaira H."/>
            <person name="Kondo H."/>
            <person name="Sugawara M."/>
            <person name="Takahashi M."/>
            <person name="Kanda K."/>
            <person name="Yokoi T."/>
            <person name="Furuya T."/>
            <person name="Kikkawa E."/>
            <person name="Omura Y."/>
            <person name="Abe K."/>
            <person name="Kamihara K."/>
            <person name="Katsuta N."/>
            <person name="Sato K."/>
            <person name="Tanikawa M."/>
            <person name="Yamazaki M."/>
            <person name="Ninomiya K."/>
            <person name="Ishibashi T."/>
            <person name="Yamashita H."/>
            <person name="Murakawa K."/>
            <person name="Fujimori K."/>
            <person name="Tanai H."/>
            <person name="Kimata M."/>
            <person name="Watanabe M."/>
            <person name="Hiraoka S."/>
            <person name="Chiba Y."/>
            <person name="Ishida S."/>
            <person name="Ono Y."/>
            <person name="Takiguchi S."/>
            <person name="Watanabe S."/>
            <person name="Yosida M."/>
            <person name="Hotuta T."/>
            <person name="Kusano J."/>
            <person name="Kanehori K."/>
            <person name="Takahashi-Fujii A."/>
            <person name="Hara H."/>
            <person name="Tanase T.-O."/>
            <person name="Nomura Y."/>
            <person name="Togiya S."/>
            <person name="Komai F."/>
            <person name="Hara R."/>
            <person name="Takeuchi K."/>
            <person name="Arita M."/>
            <person name="Imose N."/>
            <person name="Musashino K."/>
            <person name="Yuuki H."/>
            <person name="Oshima A."/>
            <person name="Sasaki N."/>
            <person name="Aotsuka S."/>
            <person name="Yoshikawa Y."/>
            <person name="Matsunawa H."/>
            <person name="Ichihara T."/>
            <person name="Shiohata N."/>
            <person name="Sano S."/>
            <person name="Moriya S."/>
            <person name="Momiyama H."/>
            <person name="Satoh N."/>
            <person name="Takami S."/>
            <person name="Terashima Y."/>
            <person name="Suzuki O."/>
            <person name="Nakagawa S."/>
            <person name="Senoh A."/>
            <person name="Mizoguchi H."/>
            <person name="Goto Y."/>
            <person name="Shimizu F."/>
            <person name="Wakebe H."/>
            <person name="Hishigaki H."/>
            <person name="Watanabe T."/>
            <person name="Sugiyama A."/>
            <person name="Takemoto M."/>
            <person name="Kawakami B."/>
            <person name="Yamazaki M."/>
            <person name="Watanabe K."/>
            <person name="Kumagai A."/>
            <person name="Itakura S."/>
            <person name="Fukuzumi Y."/>
            <person name="Fujimori Y."/>
            <person name="Komiyama M."/>
            <person name="Tashiro H."/>
            <person name="Tanigami A."/>
            <person name="Fujiwara T."/>
            <person name="Ono T."/>
            <person name="Yamada K."/>
            <person name="Fujii Y."/>
            <person name="Ozaki K."/>
            <person name="Hirao M."/>
            <person name="Ohmori Y."/>
            <person name="Kawabata A."/>
            <person name="Hikiji T."/>
            <person name="Kobatake N."/>
            <person name="Inagaki H."/>
            <person name="Ikema Y."/>
            <person name="Okamoto S."/>
            <person name="Okitani R."/>
            <person name="Kawakami T."/>
            <person name="Noguchi S."/>
            <person name="Itoh T."/>
            <person name="Shigeta K."/>
            <person name="Senba T."/>
            <person name="Matsumura K."/>
            <person name="Nakajima Y."/>
            <person name="Mizuno T."/>
            <person name="Morinaga M."/>
            <person name="Sasaki M."/>
            <person name="Togashi T."/>
            <person name="Oyama M."/>
            <person name="Hata H."/>
            <person name="Watanabe M."/>
            <person name="Komatsu T."/>
            <person name="Mizushima-Sugano J."/>
            <person name="Satoh T."/>
            <person name="Shirai Y."/>
            <person name="Takahashi Y."/>
            <person name="Nakagawa K."/>
            <person name="Okumura K."/>
            <person name="Nagase T."/>
            <person name="Nomura N."/>
            <person name="Kikuchi H."/>
            <person name="Masuho Y."/>
            <person name="Yamashita R."/>
            <person name="Nakai K."/>
            <person name="Yada T."/>
            <person name="Nakamura Y."/>
            <person name="Ohara O."/>
            <person name="Isogai T."/>
            <person name="Sugano S."/>
        </authorList>
    </citation>
    <scope>NUCLEOTIDE SEQUENCE [LARGE SCALE MRNA] (ISOFORMS 1 AND 3)</scope>
    <scope>VARIANTS MET-129; ILE-360 AND LYS-727</scope>
    <source>
        <tissue>Thymus</tissue>
        <tissue>Trachea</tissue>
    </source>
</reference>
<reference key="2">
    <citation type="journal article" date="2007" name="BMC Genomics">
        <title>The full-ORF clone resource of the German cDNA consortium.</title>
        <authorList>
            <person name="Bechtel S."/>
            <person name="Rosenfelder H."/>
            <person name="Duda A."/>
            <person name="Schmidt C.P."/>
            <person name="Ernst U."/>
            <person name="Wellenreuther R."/>
            <person name="Mehrle A."/>
            <person name="Schuster C."/>
            <person name="Bahr A."/>
            <person name="Bloecker H."/>
            <person name="Heubner D."/>
            <person name="Hoerlein A."/>
            <person name="Michel G."/>
            <person name="Wedler H."/>
            <person name="Koehrer K."/>
            <person name="Ottenwaelder B."/>
            <person name="Poustka A."/>
            <person name="Wiemann S."/>
            <person name="Schupp I."/>
        </authorList>
    </citation>
    <scope>NUCLEOTIDE SEQUENCE [LARGE SCALE MRNA] (ISOFORM 2)</scope>
    <scope>VARIANTS MET-129; ILE-360 AND LYS-727</scope>
    <source>
        <tissue>Endometrium</tissue>
    </source>
</reference>
<reference key="3">
    <citation type="journal article" date="2004" name="Nature">
        <title>The DNA sequence and biology of human chromosome 19.</title>
        <authorList>
            <person name="Grimwood J."/>
            <person name="Gordon L.A."/>
            <person name="Olsen A.S."/>
            <person name="Terry A."/>
            <person name="Schmutz J."/>
            <person name="Lamerdin J.E."/>
            <person name="Hellsten U."/>
            <person name="Goodstein D."/>
            <person name="Couronne O."/>
            <person name="Tran-Gyamfi M."/>
            <person name="Aerts A."/>
            <person name="Altherr M."/>
            <person name="Ashworth L."/>
            <person name="Bajorek E."/>
            <person name="Black S."/>
            <person name="Branscomb E."/>
            <person name="Caenepeel S."/>
            <person name="Carrano A.V."/>
            <person name="Caoile C."/>
            <person name="Chan Y.M."/>
            <person name="Christensen M."/>
            <person name="Cleland C.A."/>
            <person name="Copeland A."/>
            <person name="Dalin E."/>
            <person name="Dehal P."/>
            <person name="Denys M."/>
            <person name="Detter J.C."/>
            <person name="Escobar J."/>
            <person name="Flowers D."/>
            <person name="Fotopulos D."/>
            <person name="Garcia C."/>
            <person name="Georgescu A.M."/>
            <person name="Glavina T."/>
            <person name="Gomez M."/>
            <person name="Gonzales E."/>
            <person name="Groza M."/>
            <person name="Hammon N."/>
            <person name="Hawkins T."/>
            <person name="Haydu L."/>
            <person name="Ho I."/>
            <person name="Huang W."/>
            <person name="Israni S."/>
            <person name="Jett J."/>
            <person name="Kadner K."/>
            <person name="Kimball H."/>
            <person name="Kobayashi A."/>
            <person name="Larionov V."/>
            <person name="Leem S.-H."/>
            <person name="Lopez F."/>
            <person name="Lou Y."/>
            <person name="Lowry S."/>
            <person name="Malfatti S."/>
            <person name="Martinez D."/>
            <person name="McCready P.M."/>
            <person name="Medina C."/>
            <person name="Morgan J."/>
            <person name="Nelson K."/>
            <person name="Nolan M."/>
            <person name="Ovcharenko I."/>
            <person name="Pitluck S."/>
            <person name="Pollard M."/>
            <person name="Popkie A.P."/>
            <person name="Predki P."/>
            <person name="Quan G."/>
            <person name="Ramirez L."/>
            <person name="Rash S."/>
            <person name="Retterer J."/>
            <person name="Rodriguez A."/>
            <person name="Rogers S."/>
            <person name="Salamov A."/>
            <person name="Salazar A."/>
            <person name="She X."/>
            <person name="Smith D."/>
            <person name="Slezak T."/>
            <person name="Solovyev V."/>
            <person name="Thayer N."/>
            <person name="Tice H."/>
            <person name="Tsai M."/>
            <person name="Ustaszewska A."/>
            <person name="Vo N."/>
            <person name="Wagner M."/>
            <person name="Wheeler J."/>
            <person name="Wu K."/>
            <person name="Xie G."/>
            <person name="Yang J."/>
            <person name="Dubchak I."/>
            <person name="Furey T.S."/>
            <person name="DeJong P."/>
            <person name="Dickson M."/>
            <person name="Gordon D."/>
            <person name="Eichler E.E."/>
            <person name="Pennacchio L.A."/>
            <person name="Richardson P."/>
            <person name="Stubbs L."/>
            <person name="Rokhsar D.S."/>
            <person name="Myers R.M."/>
            <person name="Rubin E.M."/>
            <person name="Lucas S.M."/>
        </authorList>
    </citation>
    <scope>NUCLEOTIDE SEQUENCE [LARGE SCALE GENOMIC DNA]</scope>
</reference>
<reference key="4">
    <citation type="journal article" date="2004" name="Genome Res.">
        <title>The status, quality, and expansion of the NIH full-length cDNA project: the Mammalian Gene Collection (MGC).</title>
        <authorList>
            <consortium name="The MGC Project Team"/>
        </authorList>
    </citation>
    <scope>NUCLEOTIDE SEQUENCE [LARGE SCALE MRNA] (ISOFORMS 1 AND 2)</scope>
    <source>
        <tissue>Brain</tissue>
    </source>
</reference>
<keyword id="KW-0025">Alternative splicing</keyword>
<keyword id="KW-0238">DNA-binding</keyword>
<keyword id="KW-0479">Metal-binding</keyword>
<keyword id="KW-0539">Nucleus</keyword>
<keyword id="KW-1267">Proteomics identification</keyword>
<keyword id="KW-1185">Reference proteome</keyword>
<keyword id="KW-0677">Repeat</keyword>
<keyword id="KW-0804">Transcription</keyword>
<keyword id="KW-0805">Transcription regulation</keyword>
<keyword id="KW-0862">Zinc</keyword>
<keyword id="KW-0863">Zinc-finger</keyword>
<sequence length="731" mass="83739">MMQAQESLTLEDVAVDFTWEEWQFLSPAQKDLYRDVMLENYSNLVAVGYQASKPDALSKLERGEETCTTEDEIYSRICSEIRKIDDPLQHHLQNQSIQKSVKQCHEQNMFGNIVNQNKGHFLLKQDCDTFDLHEKPLKSNLSFENQKRSSGLKNSAEFNRDGKSLFHANHKQFYTEMKFPAIAKPINKSQFIKQQRTHNIENAHVCSECGKAFLKLSQFIDHQRVHTGEKPHVCSMCGKAFSRKSRLMDHQRTHTELKHYECTECDKTFLKKSQLNIHQKTHMGGKPYTCSQCGKAFIKKCRLIYHQRTHTGEKPHGCSVCGKAFSTKFSLTTHQKTHTGEKPYICSECGKGFIEKRRLTAHHRTHTGEKPFICNKCGKGFTLKNSLITHQQTHTGEKLYTCSECGKGFSMKHCLMVHQRTHTGEKPYKCNECGKGFALKSPLIRHQRTHTGEKPYVCTECRKGFTMKSDLIVHQRTHTAEKPYICNDCGKGFTVKSRLIVHQRTHTGEKPYVCGECGKGFPAKIRLMGHQRTHTGEKPYICNECGKGFTEKSHLNVHRRTHTGEKPYVCSECGKGLTGKSMLIAHQRTHTGEKPYICNECGKGFTMKSTLSIHQQTHTGEKPYKCNECDKTFRKKTCLIQHQRFHTGKTSFACTECGKFSLRKNDLITHQRIHTGEKPYKCSDCGKAFTTKSGLNVHQRKHTGERPYGCSDCGKAFAHLSILVKHRRIHR</sequence>
<name>ZN615_HUMAN</name>
<comment type="function">
    <text>May be involved in transcriptional regulation.</text>
</comment>
<comment type="subcellular location">
    <subcellularLocation>
        <location evidence="8">Nucleus</location>
    </subcellularLocation>
</comment>
<comment type="alternative products">
    <event type="alternative splicing"/>
    <isoform>
        <id>Q8N8J6-1</id>
        <name>1</name>
        <sequence type="displayed"/>
    </isoform>
    <isoform>
        <id>Q8N8J6-2</id>
        <name>2</name>
        <sequence type="described" ref="VSP_029582"/>
    </isoform>
    <isoform>
        <id>Q8N8J6-3</id>
        <name>3</name>
        <sequence type="described" ref="VSP_039717 VSP_029582"/>
    </isoform>
</comment>
<comment type="similarity">
    <text evidence="8">Belongs to the krueppel C2H2-type zinc-finger protein family.</text>
</comment>
<comment type="caution">
    <text evidence="8">It is uncertain whether Met-1 or Met-2 is the initiator.</text>
</comment>
<comment type="sequence caution" evidence="8">
    <conflict type="miscellaneous discrepancy">
        <sequence resource="EMBL-CDS" id="BAC87399"/>
    </conflict>
    <text>aberrant splicing.</text>
</comment>
<organism>
    <name type="scientific">Homo sapiens</name>
    <name type="common">Human</name>
    <dbReference type="NCBI Taxonomy" id="9606"/>
    <lineage>
        <taxon>Eukaryota</taxon>
        <taxon>Metazoa</taxon>
        <taxon>Chordata</taxon>
        <taxon>Craniata</taxon>
        <taxon>Vertebrata</taxon>
        <taxon>Euteleostomi</taxon>
        <taxon>Mammalia</taxon>
        <taxon>Eutheria</taxon>
        <taxon>Euarchontoglires</taxon>
        <taxon>Primates</taxon>
        <taxon>Haplorrhini</taxon>
        <taxon>Catarrhini</taxon>
        <taxon>Hominidae</taxon>
        <taxon>Homo</taxon>
    </lineage>
</organism>
<accession>Q8N8J6</accession>
<accession>B7ZKW9</accession>
<accession>Q2M2Y6</accession>
<accession>Q5CZB0</accession>
<accession>Q6ZMT7</accession>
<accession>Q6ZRB3</accession>
<protein>
    <recommendedName>
        <fullName>Zinc finger protein 615</fullName>
    </recommendedName>
</protein>